<name>MED6_DROME</name>
<organism>
    <name type="scientific">Drosophila melanogaster</name>
    <name type="common">Fruit fly</name>
    <dbReference type="NCBI Taxonomy" id="7227"/>
    <lineage>
        <taxon>Eukaryota</taxon>
        <taxon>Metazoa</taxon>
        <taxon>Ecdysozoa</taxon>
        <taxon>Arthropoda</taxon>
        <taxon>Hexapoda</taxon>
        <taxon>Insecta</taxon>
        <taxon>Pterygota</taxon>
        <taxon>Neoptera</taxon>
        <taxon>Endopterygota</taxon>
        <taxon>Diptera</taxon>
        <taxon>Brachycera</taxon>
        <taxon>Muscomorpha</taxon>
        <taxon>Ephydroidea</taxon>
        <taxon>Drosophilidae</taxon>
        <taxon>Drosophila</taxon>
        <taxon>Sophophora</taxon>
    </lineage>
</organism>
<sequence length="249" mass="28374">MASRQMTNDHLRLSWHDTQMMATLSPQTVMDYFCRKSNPFYDHMCNNETVRMQRLGPEHLHNMIGLEYILLHVAEPILYVIRKQHRHNPSEATPIADYYIIGGTVYKAPDLANVINSRILNTVVNLQSAFEEASSYARYHPNKGYTWDFSSNKVFSDRSKSDKKDANSAKDENSGTLFQKQRVDMLLAELLRKFPPPIPPMLQNLQQPPPAGDDLNTARNASEMNNATGPLDIKTEGVDMKPPPEKKSK</sequence>
<protein>
    <recommendedName>
        <fullName>Mediator of RNA polymerase II transcription subunit 6</fullName>
    </recommendedName>
    <alternativeName>
        <fullName>Mediator complex subunit 6</fullName>
    </alternativeName>
    <alternativeName>
        <fullName>dMED6</fullName>
    </alternativeName>
</protein>
<keyword id="KW-0010">Activator</keyword>
<keyword id="KW-0539">Nucleus</keyword>
<keyword id="KW-1185">Reference proteome</keyword>
<keyword id="KW-0804">Transcription</keyword>
<keyword id="KW-0805">Transcription regulation</keyword>
<reference key="1">
    <citation type="journal article" date="2000" name="Science">
        <title>The genome sequence of Drosophila melanogaster.</title>
        <authorList>
            <person name="Adams M.D."/>
            <person name="Celniker S.E."/>
            <person name="Holt R.A."/>
            <person name="Evans C.A."/>
            <person name="Gocayne J.D."/>
            <person name="Amanatides P.G."/>
            <person name="Scherer S.E."/>
            <person name="Li P.W."/>
            <person name="Hoskins R.A."/>
            <person name="Galle R.F."/>
            <person name="George R.A."/>
            <person name="Lewis S.E."/>
            <person name="Richards S."/>
            <person name="Ashburner M."/>
            <person name="Henderson S.N."/>
            <person name="Sutton G.G."/>
            <person name="Wortman J.R."/>
            <person name="Yandell M.D."/>
            <person name="Zhang Q."/>
            <person name="Chen L.X."/>
            <person name="Brandon R.C."/>
            <person name="Rogers Y.-H.C."/>
            <person name="Blazej R.G."/>
            <person name="Champe M."/>
            <person name="Pfeiffer B.D."/>
            <person name="Wan K.H."/>
            <person name="Doyle C."/>
            <person name="Baxter E.G."/>
            <person name="Helt G."/>
            <person name="Nelson C.R."/>
            <person name="Miklos G.L.G."/>
            <person name="Abril J.F."/>
            <person name="Agbayani A."/>
            <person name="An H.-J."/>
            <person name="Andrews-Pfannkoch C."/>
            <person name="Baldwin D."/>
            <person name="Ballew R.M."/>
            <person name="Basu A."/>
            <person name="Baxendale J."/>
            <person name="Bayraktaroglu L."/>
            <person name="Beasley E.M."/>
            <person name="Beeson K.Y."/>
            <person name="Benos P.V."/>
            <person name="Berman B.P."/>
            <person name="Bhandari D."/>
            <person name="Bolshakov S."/>
            <person name="Borkova D."/>
            <person name="Botchan M.R."/>
            <person name="Bouck J."/>
            <person name="Brokstein P."/>
            <person name="Brottier P."/>
            <person name="Burtis K.C."/>
            <person name="Busam D.A."/>
            <person name="Butler H."/>
            <person name="Cadieu E."/>
            <person name="Center A."/>
            <person name="Chandra I."/>
            <person name="Cherry J.M."/>
            <person name="Cawley S."/>
            <person name="Dahlke C."/>
            <person name="Davenport L.B."/>
            <person name="Davies P."/>
            <person name="de Pablos B."/>
            <person name="Delcher A."/>
            <person name="Deng Z."/>
            <person name="Mays A.D."/>
            <person name="Dew I."/>
            <person name="Dietz S.M."/>
            <person name="Dodson K."/>
            <person name="Doup L.E."/>
            <person name="Downes M."/>
            <person name="Dugan-Rocha S."/>
            <person name="Dunkov B.C."/>
            <person name="Dunn P."/>
            <person name="Durbin K.J."/>
            <person name="Evangelista C.C."/>
            <person name="Ferraz C."/>
            <person name="Ferriera S."/>
            <person name="Fleischmann W."/>
            <person name="Fosler C."/>
            <person name="Gabrielian A.E."/>
            <person name="Garg N.S."/>
            <person name="Gelbart W.M."/>
            <person name="Glasser K."/>
            <person name="Glodek A."/>
            <person name="Gong F."/>
            <person name="Gorrell J.H."/>
            <person name="Gu Z."/>
            <person name="Guan P."/>
            <person name="Harris M."/>
            <person name="Harris N.L."/>
            <person name="Harvey D.A."/>
            <person name="Heiman T.J."/>
            <person name="Hernandez J.R."/>
            <person name="Houck J."/>
            <person name="Hostin D."/>
            <person name="Houston K.A."/>
            <person name="Howland T.J."/>
            <person name="Wei M.-H."/>
            <person name="Ibegwam C."/>
            <person name="Jalali M."/>
            <person name="Kalush F."/>
            <person name="Karpen G.H."/>
            <person name="Ke Z."/>
            <person name="Kennison J.A."/>
            <person name="Ketchum K.A."/>
            <person name="Kimmel B.E."/>
            <person name="Kodira C.D."/>
            <person name="Kraft C.L."/>
            <person name="Kravitz S."/>
            <person name="Kulp D."/>
            <person name="Lai Z."/>
            <person name="Lasko P."/>
            <person name="Lei Y."/>
            <person name="Levitsky A.A."/>
            <person name="Li J.H."/>
            <person name="Li Z."/>
            <person name="Liang Y."/>
            <person name="Lin X."/>
            <person name="Liu X."/>
            <person name="Mattei B."/>
            <person name="McIntosh T.C."/>
            <person name="McLeod M.P."/>
            <person name="McPherson D."/>
            <person name="Merkulov G."/>
            <person name="Milshina N.V."/>
            <person name="Mobarry C."/>
            <person name="Morris J."/>
            <person name="Moshrefi A."/>
            <person name="Mount S.M."/>
            <person name="Moy M."/>
            <person name="Murphy B."/>
            <person name="Murphy L."/>
            <person name="Muzny D.M."/>
            <person name="Nelson D.L."/>
            <person name="Nelson D.R."/>
            <person name="Nelson K.A."/>
            <person name="Nixon K."/>
            <person name="Nusskern D.R."/>
            <person name="Pacleb J.M."/>
            <person name="Palazzolo M."/>
            <person name="Pittman G.S."/>
            <person name="Pan S."/>
            <person name="Pollard J."/>
            <person name="Puri V."/>
            <person name="Reese M.G."/>
            <person name="Reinert K."/>
            <person name="Remington K."/>
            <person name="Saunders R.D.C."/>
            <person name="Scheeler F."/>
            <person name="Shen H."/>
            <person name="Shue B.C."/>
            <person name="Siden-Kiamos I."/>
            <person name="Simpson M."/>
            <person name="Skupski M.P."/>
            <person name="Smith T.J."/>
            <person name="Spier E."/>
            <person name="Spradling A.C."/>
            <person name="Stapleton M."/>
            <person name="Strong R."/>
            <person name="Sun E."/>
            <person name="Svirskas R."/>
            <person name="Tector C."/>
            <person name="Turner R."/>
            <person name="Venter E."/>
            <person name="Wang A.H."/>
            <person name="Wang X."/>
            <person name="Wang Z.-Y."/>
            <person name="Wassarman D.A."/>
            <person name="Weinstock G.M."/>
            <person name="Weissenbach J."/>
            <person name="Williams S.M."/>
            <person name="Woodage T."/>
            <person name="Worley K.C."/>
            <person name="Wu D."/>
            <person name="Yang S."/>
            <person name="Yao Q.A."/>
            <person name="Ye J."/>
            <person name="Yeh R.-F."/>
            <person name="Zaveri J.S."/>
            <person name="Zhan M."/>
            <person name="Zhang G."/>
            <person name="Zhao Q."/>
            <person name="Zheng L."/>
            <person name="Zheng X.H."/>
            <person name="Zhong F.N."/>
            <person name="Zhong W."/>
            <person name="Zhou X."/>
            <person name="Zhu S.C."/>
            <person name="Zhu X."/>
            <person name="Smith H.O."/>
            <person name="Gibbs R.A."/>
            <person name="Myers E.W."/>
            <person name="Rubin G.M."/>
            <person name="Venter J.C."/>
        </authorList>
    </citation>
    <scope>NUCLEOTIDE SEQUENCE [LARGE SCALE GENOMIC DNA]</scope>
    <source>
        <strain>Berkeley</strain>
    </source>
</reference>
<reference key="2">
    <citation type="journal article" date="2002" name="Genome Biol.">
        <title>Annotation of the Drosophila melanogaster euchromatic genome: a systematic review.</title>
        <authorList>
            <person name="Misra S."/>
            <person name="Crosby M.A."/>
            <person name="Mungall C.J."/>
            <person name="Matthews B.B."/>
            <person name="Campbell K.S."/>
            <person name="Hradecky P."/>
            <person name="Huang Y."/>
            <person name="Kaminker J.S."/>
            <person name="Millburn G.H."/>
            <person name="Prochnik S.E."/>
            <person name="Smith C.D."/>
            <person name="Tupy J.L."/>
            <person name="Whitfield E.J."/>
            <person name="Bayraktaroglu L."/>
            <person name="Berman B.P."/>
            <person name="Bettencourt B.R."/>
            <person name="Celniker S.E."/>
            <person name="de Grey A.D.N.J."/>
            <person name="Drysdale R.A."/>
            <person name="Harris N.L."/>
            <person name="Richter J."/>
            <person name="Russo S."/>
            <person name="Schroeder A.J."/>
            <person name="Shu S.Q."/>
            <person name="Stapleton M."/>
            <person name="Yamada C."/>
            <person name="Ashburner M."/>
            <person name="Gelbart W.M."/>
            <person name="Rubin G.M."/>
            <person name="Lewis S.E."/>
        </authorList>
    </citation>
    <scope>GENOME REANNOTATION</scope>
    <source>
        <strain>Berkeley</strain>
    </source>
</reference>
<reference key="3">
    <citation type="journal article" date="2002" name="Genome Biol.">
        <title>A Drosophila full-length cDNA resource.</title>
        <authorList>
            <person name="Stapleton M."/>
            <person name="Carlson J.W."/>
            <person name="Brokstein P."/>
            <person name="Yu C."/>
            <person name="Champe M."/>
            <person name="George R.A."/>
            <person name="Guarin H."/>
            <person name="Kronmiller B."/>
            <person name="Pacleb J.M."/>
            <person name="Park S."/>
            <person name="Wan K.H."/>
            <person name="Rubin G.M."/>
            <person name="Celniker S.E."/>
        </authorList>
    </citation>
    <scope>NUCLEOTIDE SEQUENCE [LARGE SCALE MRNA]</scope>
    <source>
        <strain>Berkeley</strain>
        <tissue>Embryo</tissue>
    </source>
</reference>
<reference key="4">
    <citation type="journal article" date="2001" name="Mol. Cell">
        <title>Mediator, not holoenzyme, is directly recruited to the heat shock promoter by HSF upon heat shock.</title>
        <authorList>
            <person name="Park J.M."/>
            <person name="Werner J."/>
            <person name="Kim J.M."/>
            <person name="Lis J.T."/>
            <person name="Kim Y.-J."/>
        </authorList>
    </citation>
    <scope>ASSOCIATION WITH PROMOTER REGIONS</scope>
</reference>
<reference key="5">
    <citation type="journal article" date="2001" name="Mol. Cell. Biol.">
        <title>Drosophila Mediator complex is broadly utilized by diverse gene-specific transcription factors at different types of core promoters.</title>
        <authorList>
            <person name="Park J.M."/>
            <person name="Gim B.S."/>
            <person name="Kim J.M."/>
            <person name="Yoon J.H."/>
            <person name="Kim H.-S."/>
            <person name="Kang J.-G."/>
            <person name="Kim Y.-J."/>
        </authorList>
    </citation>
    <scope>IDENTIFICATION BY MASS SPECTROMETRY</scope>
    <scope>FUNCTION OF THE MEDIATOR COMPLEX</scope>
    <scope>IDENTIFICATION IN A COMPLEX WITH CDK8; MED4; MED14; MED17; MED18; MED20; MED21 AND MED31</scope>
    <scope>DEVELOPMENTAL STAGE</scope>
</reference>
<reference key="6">
    <citation type="journal article" date="2002" name="J. Biol. Chem.">
        <title>Novel Mediator proteins of the small Mediator complex in Drosophila SL2 cells.</title>
        <authorList>
            <person name="Gu J.-Y."/>
            <person name="Park J.M."/>
            <person name="Song E.J."/>
            <person name="Mizuguchi G."/>
            <person name="Yoon J.H."/>
            <person name="Kim-Ha J."/>
            <person name="Lee K.-J."/>
            <person name="Kim Y.-J."/>
        </authorList>
    </citation>
    <scope>IDENTIFICATION BY MASS SPECTROMETRY</scope>
    <scope>FUNCTION OF THE MEDIATOR COMPLEX</scope>
    <scope>IDENTIFICATION IN THE MEDIATOR COMPLEX</scope>
    <scope>INTERACTION WITH MED17; MED18; MED20; MED21; MED23; MED24; MED27 AND MED30</scope>
</reference>
<reference key="7">
    <citation type="journal article" date="2006" name="Genes Dev.">
        <title>Coactivator cross-talk specifies transcriptional output.</title>
        <authorList>
            <person name="Marr M.T. II"/>
            <person name="Isogai Y."/>
            <person name="Wright K.J."/>
            <person name="Tjian R."/>
        </authorList>
    </citation>
    <scope>FUNCTION</scope>
</reference>
<accession>Q8MSX2</accession>
<accession>Q9VH74</accession>
<comment type="function">
    <text evidence="3 4 5">Component of the Mediator complex, a coactivator involved in the regulated transcription of nearly all RNA polymerase II-dependent genes. Mediator functions as a bridge to convey information from gene-specific regulatory proteins to the basal RNA polymerase II transcription machinery. Mediator is recruited to promoters by direct interactions with regulatory proteins and serves as a scaffold for the assembly of a functional preinitiation complex with RNA polymerase II and the general transcription factors. Required for activated transcription of the MtnA, MtnB and MtnD genes.</text>
</comment>
<comment type="subunit">
    <text evidence="3 4">Component of the Mediator complex, which includes at least MED4, MED6, MED14, MED17, MED18, MED20, MED21, MED23, MED24, MED27, MED30 and MED31.</text>
</comment>
<comment type="interaction">
    <interactant intactId="EBI-194467">
        <id>Q8MSX2</id>
    </interactant>
    <interactant intactId="EBI-135284">
        <id>Q9VEC1</id>
        <label>MED17</label>
    </interactant>
    <organismsDiffer>false</organismsDiffer>
    <experiments>7</experiments>
</comment>
<comment type="interaction">
    <interactant intactId="EBI-194467">
        <id>Q8MSX2</id>
    </interactant>
    <interactant intactId="EBI-175591">
        <id>P91641</id>
        <label>MED20</label>
    </interactant>
    <organismsDiffer>false</organismsDiffer>
    <experiments>2</experiments>
</comment>
<comment type="subcellular location">
    <subcellularLocation>
        <location evidence="1">Nucleus</location>
    </subcellularLocation>
</comment>
<comment type="developmental stage">
    <text evidence="3">Maternally encoded. Expression decreases during larval stages then rises during mid-pupal metamorphosis.</text>
</comment>
<comment type="similarity">
    <text evidence="6">Belongs to the Mediator complex subunit 6 family.</text>
</comment>
<dbReference type="EMBL" id="AE014297">
    <property type="protein sequence ID" value="AAF54445.2"/>
    <property type="molecule type" value="Genomic_DNA"/>
</dbReference>
<dbReference type="EMBL" id="AE014297">
    <property type="protein sequence ID" value="AAN13445.2"/>
    <property type="molecule type" value="Genomic_DNA"/>
</dbReference>
<dbReference type="EMBL" id="AY118517">
    <property type="protein sequence ID" value="AAM49886.1"/>
    <property type="molecule type" value="mRNA"/>
</dbReference>
<dbReference type="EMBL" id="BT001633">
    <property type="protein sequence ID" value="AAN71388.1"/>
    <property type="molecule type" value="mRNA"/>
</dbReference>
<dbReference type="RefSeq" id="NP_001163577.1">
    <property type="nucleotide sequence ID" value="NM_001170106.1"/>
</dbReference>
<dbReference type="RefSeq" id="NP_001163578.1">
    <property type="nucleotide sequence ID" value="NM_001170107.1"/>
</dbReference>
<dbReference type="RefSeq" id="NP_001287264.1">
    <property type="nucleotide sequence ID" value="NM_001300335.1"/>
</dbReference>
<dbReference type="RefSeq" id="NP_651988.2">
    <property type="nucleotide sequence ID" value="NM_143731.6"/>
</dbReference>
<dbReference type="RefSeq" id="NP_731403.2">
    <property type="nucleotide sequence ID" value="NM_169310.2"/>
</dbReference>
<dbReference type="SMR" id="Q8MSX2"/>
<dbReference type="BioGRID" id="69231">
    <property type="interactions" value="41"/>
</dbReference>
<dbReference type="ComplexPortal" id="CPX-2308">
    <property type="entry name" value="Core mediator complex"/>
</dbReference>
<dbReference type="FunCoup" id="Q8MSX2">
    <property type="interactions" value="2711"/>
</dbReference>
<dbReference type="IntAct" id="Q8MSX2">
    <property type="interactions" value="60"/>
</dbReference>
<dbReference type="STRING" id="7227.FBpp0081640"/>
<dbReference type="PaxDb" id="7227-FBpp0081639"/>
<dbReference type="DNASU" id="44728"/>
<dbReference type="EnsemblMetazoa" id="FBtr0082161">
    <property type="protein sequence ID" value="FBpp0081639"/>
    <property type="gene ID" value="FBgn0024330"/>
</dbReference>
<dbReference type="EnsemblMetazoa" id="FBtr0082162">
    <property type="protein sequence ID" value="FBpp0081640"/>
    <property type="gene ID" value="FBgn0024330"/>
</dbReference>
<dbReference type="EnsemblMetazoa" id="FBtr0301872">
    <property type="protein sequence ID" value="FBpp0291086"/>
    <property type="gene ID" value="FBgn0024330"/>
</dbReference>
<dbReference type="EnsemblMetazoa" id="FBtr0301873">
    <property type="protein sequence ID" value="FBpp0291087"/>
    <property type="gene ID" value="FBgn0024330"/>
</dbReference>
<dbReference type="EnsemblMetazoa" id="FBtr0339719">
    <property type="protein sequence ID" value="FBpp0308776"/>
    <property type="gene ID" value="FBgn0024330"/>
</dbReference>
<dbReference type="GeneID" id="44728"/>
<dbReference type="KEGG" id="dme:Dmel_CG9473"/>
<dbReference type="AGR" id="FB:FBgn0024330"/>
<dbReference type="CTD" id="10001"/>
<dbReference type="FlyBase" id="FBgn0024330">
    <property type="gene designation" value="MED6"/>
</dbReference>
<dbReference type="VEuPathDB" id="VectorBase:FBgn0024330"/>
<dbReference type="eggNOG" id="KOG3169">
    <property type="taxonomic scope" value="Eukaryota"/>
</dbReference>
<dbReference type="GeneTree" id="ENSGT00390000017666"/>
<dbReference type="HOGENOM" id="CLU_077754_1_1_1"/>
<dbReference type="InParanoid" id="Q8MSX2"/>
<dbReference type="OMA" id="KKDMKPP"/>
<dbReference type="OrthoDB" id="344220at2759"/>
<dbReference type="PhylomeDB" id="Q8MSX2"/>
<dbReference type="Reactome" id="R-DME-9841922">
    <property type="pathway name" value="MLL4 and MLL3 complexes regulate expression of PPARG target genes in adipogenesis and hepatic steatosis"/>
</dbReference>
<dbReference type="BioGRID-ORCS" id="44728">
    <property type="hits" value="0 hits in 1 CRISPR screen"/>
</dbReference>
<dbReference type="GenomeRNAi" id="44728"/>
<dbReference type="PRO" id="PR:Q8MSX2"/>
<dbReference type="Proteomes" id="UP000000803">
    <property type="component" value="Chromosome 3R"/>
</dbReference>
<dbReference type="Bgee" id="FBgn0024330">
    <property type="expression patterns" value="Expressed in mechanosensory neuron of leg chordotonal organ in insect leg and 173 other cell types or tissues"/>
</dbReference>
<dbReference type="ExpressionAtlas" id="Q8MSX2">
    <property type="expression patterns" value="baseline and differential"/>
</dbReference>
<dbReference type="GO" id="GO:0070847">
    <property type="term" value="C:core mediator complex"/>
    <property type="evidence" value="ECO:0000318"/>
    <property type="project" value="GO_Central"/>
</dbReference>
<dbReference type="GO" id="GO:0005737">
    <property type="term" value="C:cytoplasm"/>
    <property type="evidence" value="ECO:0000314"/>
    <property type="project" value="FlyBase"/>
</dbReference>
<dbReference type="GO" id="GO:0016592">
    <property type="term" value="C:mediator complex"/>
    <property type="evidence" value="ECO:0000314"/>
    <property type="project" value="FlyBase"/>
</dbReference>
<dbReference type="GO" id="GO:0005654">
    <property type="term" value="C:nucleoplasm"/>
    <property type="evidence" value="ECO:0000250"/>
    <property type="project" value="FlyBase"/>
</dbReference>
<dbReference type="GO" id="GO:0005634">
    <property type="term" value="C:nucleus"/>
    <property type="evidence" value="ECO:0000314"/>
    <property type="project" value="FlyBase"/>
</dbReference>
<dbReference type="GO" id="GO:0003712">
    <property type="term" value="F:transcription coregulator activity"/>
    <property type="evidence" value="ECO:0000315"/>
    <property type="project" value="UniProtKB"/>
</dbReference>
<dbReference type="GO" id="GO:0050829">
    <property type="term" value="P:defense response to Gram-negative bacterium"/>
    <property type="evidence" value="ECO:0007001"/>
    <property type="project" value="FlyBase"/>
</dbReference>
<dbReference type="GO" id="GO:0045824">
    <property type="term" value="P:negative regulation of innate immune response"/>
    <property type="evidence" value="ECO:0007001"/>
    <property type="project" value="FlyBase"/>
</dbReference>
<dbReference type="GO" id="GO:0045893">
    <property type="term" value="P:positive regulation of DNA-templated transcription"/>
    <property type="evidence" value="ECO:0007669"/>
    <property type="project" value="GOC"/>
</dbReference>
<dbReference type="GO" id="GO:0006357">
    <property type="term" value="P:regulation of transcription by RNA polymerase II"/>
    <property type="evidence" value="ECO:0000314"/>
    <property type="project" value="FlyBase"/>
</dbReference>
<dbReference type="FunFam" id="3.10.450.580:FF:000005">
    <property type="entry name" value="Mediator of RNA polymerase II transcription subunit 6"/>
    <property type="match status" value="1"/>
</dbReference>
<dbReference type="Gene3D" id="3.10.450.580">
    <property type="entry name" value="Mediator complex, subunit Med6"/>
    <property type="match status" value="1"/>
</dbReference>
<dbReference type="InterPro" id="IPR007018">
    <property type="entry name" value="Mediator_Med6"/>
</dbReference>
<dbReference type="InterPro" id="IPR016820">
    <property type="entry name" value="Mediator_Med6_met/pln"/>
</dbReference>
<dbReference type="InterPro" id="IPR038566">
    <property type="entry name" value="Mediator_Med6_sf"/>
</dbReference>
<dbReference type="PANTHER" id="PTHR13104">
    <property type="entry name" value="MED-6-RELATED"/>
    <property type="match status" value="1"/>
</dbReference>
<dbReference type="Pfam" id="PF04934">
    <property type="entry name" value="Med6"/>
    <property type="match status" value="1"/>
</dbReference>
<dbReference type="PIRSF" id="PIRSF023869">
    <property type="entry name" value="Mediator_MED6_meta/pln"/>
    <property type="match status" value="1"/>
</dbReference>
<evidence type="ECO:0000250" key="1"/>
<evidence type="ECO:0000256" key="2">
    <source>
        <dbReference type="SAM" id="MobiDB-lite"/>
    </source>
</evidence>
<evidence type="ECO:0000269" key="3">
    <source>
    </source>
</evidence>
<evidence type="ECO:0000269" key="4">
    <source>
    </source>
</evidence>
<evidence type="ECO:0000269" key="5">
    <source>
    </source>
</evidence>
<evidence type="ECO:0000305" key="6"/>
<feature type="chain" id="PRO_0000303045" description="Mediator of RNA polymerase II transcription subunit 6">
    <location>
        <begin position="1"/>
        <end position="249"/>
    </location>
</feature>
<feature type="region of interest" description="Disordered" evidence="2">
    <location>
        <begin position="156"/>
        <end position="177"/>
    </location>
</feature>
<feature type="region of interest" description="Disordered" evidence="2">
    <location>
        <begin position="198"/>
        <end position="249"/>
    </location>
</feature>
<feature type="compositionally biased region" description="Basic and acidic residues" evidence="2">
    <location>
        <begin position="156"/>
        <end position="173"/>
    </location>
</feature>
<feature type="compositionally biased region" description="Polar residues" evidence="2">
    <location>
        <begin position="217"/>
        <end position="228"/>
    </location>
</feature>
<feature type="compositionally biased region" description="Basic and acidic residues" evidence="2">
    <location>
        <begin position="233"/>
        <end position="249"/>
    </location>
</feature>
<proteinExistence type="evidence at protein level"/>
<gene>
    <name type="primary">MED6</name>
    <name type="ORF">CG9473</name>
</gene>